<sequence length="188" mass="20673">MTKFLGPIAGFGVTFSTMFKKANTEFYPEEKTPTAPRYHGRHQLNRYADGLEKCIGCELCAWACPADAIFVEGADNTDEERYSPGERYGRVYQINYLRCIGCGLCIEACPTRALTMTNEYEMADDNRAGLIYEKDRLLAPLESGMVDSPHPMAPGTTAEDYYRGTVTGGAAPASQDEPEADDTAGDRP</sequence>
<reference key="1">
    <citation type="submission" date="2009-03" db="EMBL/GenBank/DDBJ databases">
        <title>Comparison of the complete genome sequences of Rhodococcus erythropolis PR4 and Rhodococcus opacus B4.</title>
        <authorList>
            <person name="Takarada H."/>
            <person name="Sekine M."/>
            <person name="Hosoyama A."/>
            <person name="Yamada R."/>
            <person name="Fujisawa T."/>
            <person name="Omata S."/>
            <person name="Shimizu A."/>
            <person name="Tsukatani N."/>
            <person name="Tanikawa S."/>
            <person name="Fujita N."/>
            <person name="Harayama S."/>
        </authorList>
    </citation>
    <scope>NUCLEOTIDE SEQUENCE [LARGE SCALE GENOMIC DNA]</scope>
    <source>
        <strain>B4</strain>
    </source>
</reference>
<dbReference type="EC" id="7.1.1.-" evidence="1"/>
<dbReference type="EMBL" id="AP011115">
    <property type="protein sequence ID" value="BAH54226.1"/>
    <property type="molecule type" value="Genomic_DNA"/>
</dbReference>
<dbReference type="RefSeq" id="WP_015889717.1">
    <property type="nucleotide sequence ID" value="NC_012522.1"/>
</dbReference>
<dbReference type="SMR" id="C1AZF5"/>
<dbReference type="STRING" id="632772.ROP_59790"/>
<dbReference type="KEGG" id="rop:ROP_59790"/>
<dbReference type="PATRIC" id="fig|632772.20.peg.6245"/>
<dbReference type="HOGENOM" id="CLU_067218_4_0_11"/>
<dbReference type="OrthoDB" id="9808559at2"/>
<dbReference type="Proteomes" id="UP000002212">
    <property type="component" value="Chromosome"/>
</dbReference>
<dbReference type="GO" id="GO:0005886">
    <property type="term" value="C:plasma membrane"/>
    <property type="evidence" value="ECO:0007669"/>
    <property type="project" value="UniProtKB-SubCell"/>
</dbReference>
<dbReference type="GO" id="GO:0051539">
    <property type="term" value="F:4 iron, 4 sulfur cluster binding"/>
    <property type="evidence" value="ECO:0007669"/>
    <property type="project" value="UniProtKB-KW"/>
</dbReference>
<dbReference type="GO" id="GO:0005506">
    <property type="term" value="F:iron ion binding"/>
    <property type="evidence" value="ECO:0007669"/>
    <property type="project" value="UniProtKB-UniRule"/>
</dbReference>
<dbReference type="GO" id="GO:0050136">
    <property type="term" value="F:NADH:ubiquinone reductase (non-electrogenic) activity"/>
    <property type="evidence" value="ECO:0007669"/>
    <property type="project" value="UniProtKB-UniRule"/>
</dbReference>
<dbReference type="GO" id="GO:0048038">
    <property type="term" value="F:quinone binding"/>
    <property type="evidence" value="ECO:0007669"/>
    <property type="project" value="UniProtKB-KW"/>
</dbReference>
<dbReference type="GO" id="GO:0009060">
    <property type="term" value="P:aerobic respiration"/>
    <property type="evidence" value="ECO:0007669"/>
    <property type="project" value="TreeGrafter"/>
</dbReference>
<dbReference type="FunFam" id="3.30.70.3270:FF:000007">
    <property type="entry name" value="NADH-quinone oxidoreductase subunit I"/>
    <property type="match status" value="1"/>
</dbReference>
<dbReference type="Gene3D" id="3.30.70.3270">
    <property type="match status" value="1"/>
</dbReference>
<dbReference type="HAMAP" id="MF_01351">
    <property type="entry name" value="NDH1_NuoI"/>
    <property type="match status" value="1"/>
</dbReference>
<dbReference type="InterPro" id="IPR017896">
    <property type="entry name" value="4Fe4S_Fe-S-bd"/>
</dbReference>
<dbReference type="InterPro" id="IPR017900">
    <property type="entry name" value="4Fe4S_Fe_S_CS"/>
</dbReference>
<dbReference type="InterPro" id="IPR010226">
    <property type="entry name" value="NADH_quinone_OxRdtase_chainI"/>
</dbReference>
<dbReference type="NCBIfam" id="TIGR01971">
    <property type="entry name" value="NuoI"/>
    <property type="match status" value="1"/>
</dbReference>
<dbReference type="NCBIfam" id="NF004537">
    <property type="entry name" value="PRK05888.1-3"/>
    <property type="match status" value="1"/>
</dbReference>
<dbReference type="PANTHER" id="PTHR10849:SF20">
    <property type="entry name" value="NADH DEHYDROGENASE [UBIQUINONE] IRON-SULFUR PROTEIN 8, MITOCHONDRIAL"/>
    <property type="match status" value="1"/>
</dbReference>
<dbReference type="PANTHER" id="PTHR10849">
    <property type="entry name" value="NADH DEHYDROGENASE UBIQUINONE IRON-SULFUR PROTEIN 8, MITOCHONDRIAL"/>
    <property type="match status" value="1"/>
</dbReference>
<dbReference type="Pfam" id="PF12838">
    <property type="entry name" value="Fer4_7"/>
    <property type="match status" value="1"/>
</dbReference>
<dbReference type="SUPFAM" id="SSF54862">
    <property type="entry name" value="4Fe-4S ferredoxins"/>
    <property type="match status" value="1"/>
</dbReference>
<dbReference type="PROSITE" id="PS00198">
    <property type="entry name" value="4FE4S_FER_1"/>
    <property type="match status" value="2"/>
</dbReference>
<dbReference type="PROSITE" id="PS51379">
    <property type="entry name" value="4FE4S_FER_2"/>
    <property type="match status" value="2"/>
</dbReference>
<gene>
    <name evidence="1" type="primary">nuoI</name>
    <name type="ordered locus">ROP_59790</name>
</gene>
<comment type="function">
    <text evidence="1">NDH-1 shuttles electrons from NADH, via FMN and iron-sulfur (Fe-S) centers, to quinones in the respiratory chain. The immediate electron acceptor for the enzyme in this species is believed to be ubiquinone. Couples the redox reaction to proton translocation (for every two electrons transferred, four hydrogen ions are translocated across the cytoplasmic membrane), and thus conserves the redox energy in a proton gradient.</text>
</comment>
<comment type="catalytic activity">
    <reaction evidence="1">
        <text>a quinone + NADH + 5 H(+)(in) = a quinol + NAD(+) + 4 H(+)(out)</text>
        <dbReference type="Rhea" id="RHEA:57888"/>
        <dbReference type="ChEBI" id="CHEBI:15378"/>
        <dbReference type="ChEBI" id="CHEBI:24646"/>
        <dbReference type="ChEBI" id="CHEBI:57540"/>
        <dbReference type="ChEBI" id="CHEBI:57945"/>
        <dbReference type="ChEBI" id="CHEBI:132124"/>
    </reaction>
</comment>
<comment type="cofactor">
    <cofactor evidence="1">
        <name>[4Fe-4S] cluster</name>
        <dbReference type="ChEBI" id="CHEBI:49883"/>
    </cofactor>
    <text evidence="1">Binds 2 [4Fe-4S] clusters per subunit.</text>
</comment>
<comment type="subunit">
    <text evidence="1">NDH-1 is composed of 14 different subunits. Subunits NuoA, H, J, K, L, M, N constitute the membrane sector of the complex.</text>
</comment>
<comment type="subcellular location">
    <subcellularLocation>
        <location evidence="1">Cell membrane</location>
        <topology evidence="1">Peripheral membrane protein</topology>
    </subcellularLocation>
</comment>
<comment type="similarity">
    <text evidence="1">Belongs to the complex I 23 kDa subunit family.</text>
</comment>
<organism>
    <name type="scientific">Rhodococcus opacus (strain B4)</name>
    <dbReference type="NCBI Taxonomy" id="632772"/>
    <lineage>
        <taxon>Bacteria</taxon>
        <taxon>Bacillati</taxon>
        <taxon>Actinomycetota</taxon>
        <taxon>Actinomycetes</taxon>
        <taxon>Mycobacteriales</taxon>
        <taxon>Nocardiaceae</taxon>
        <taxon>Rhodococcus</taxon>
    </lineage>
</organism>
<name>NUOI_RHOOB</name>
<keyword id="KW-0004">4Fe-4S</keyword>
<keyword id="KW-1003">Cell membrane</keyword>
<keyword id="KW-0408">Iron</keyword>
<keyword id="KW-0411">Iron-sulfur</keyword>
<keyword id="KW-0472">Membrane</keyword>
<keyword id="KW-0479">Metal-binding</keyword>
<keyword id="KW-0520">NAD</keyword>
<keyword id="KW-0874">Quinone</keyword>
<keyword id="KW-0677">Repeat</keyword>
<keyword id="KW-1278">Translocase</keyword>
<keyword id="KW-0830">Ubiquinone</keyword>
<feature type="chain" id="PRO_1000166641" description="NADH-quinone oxidoreductase subunit I">
    <location>
        <begin position="1"/>
        <end position="188"/>
    </location>
</feature>
<feature type="domain" description="4Fe-4S ferredoxin-type 1" evidence="1">
    <location>
        <begin position="44"/>
        <end position="74"/>
    </location>
</feature>
<feature type="domain" description="4Fe-4S ferredoxin-type 2" evidence="1">
    <location>
        <begin position="90"/>
        <end position="119"/>
    </location>
</feature>
<feature type="region of interest" description="Disordered" evidence="2">
    <location>
        <begin position="144"/>
        <end position="188"/>
    </location>
</feature>
<feature type="compositionally biased region" description="Acidic residues" evidence="2">
    <location>
        <begin position="176"/>
        <end position="188"/>
    </location>
</feature>
<feature type="binding site" evidence="1">
    <location>
        <position position="54"/>
    </location>
    <ligand>
        <name>[4Fe-4S] cluster</name>
        <dbReference type="ChEBI" id="CHEBI:49883"/>
        <label>1</label>
    </ligand>
</feature>
<feature type="binding site" evidence="1">
    <location>
        <position position="57"/>
    </location>
    <ligand>
        <name>[4Fe-4S] cluster</name>
        <dbReference type="ChEBI" id="CHEBI:49883"/>
        <label>1</label>
    </ligand>
</feature>
<feature type="binding site" evidence="1">
    <location>
        <position position="60"/>
    </location>
    <ligand>
        <name>[4Fe-4S] cluster</name>
        <dbReference type="ChEBI" id="CHEBI:49883"/>
        <label>1</label>
    </ligand>
</feature>
<feature type="binding site" evidence="1">
    <location>
        <position position="64"/>
    </location>
    <ligand>
        <name>[4Fe-4S] cluster</name>
        <dbReference type="ChEBI" id="CHEBI:49883"/>
        <label>2</label>
    </ligand>
</feature>
<feature type="binding site" evidence="1">
    <location>
        <position position="99"/>
    </location>
    <ligand>
        <name>[4Fe-4S] cluster</name>
        <dbReference type="ChEBI" id="CHEBI:49883"/>
        <label>2</label>
    </ligand>
</feature>
<feature type="binding site" evidence="1">
    <location>
        <position position="102"/>
    </location>
    <ligand>
        <name>[4Fe-4S] cluster</name>
        <dbReference type="ChEBI" id="CHEBI:49883"/>
        <label>2</label>
    </ligand>
</feature>
<feature type="binding site" evidence="1">
    <location>
        <position position="105"/>
    </location>
    <ligand>
        <name>[4Fe-4S] cluster</name>
        <dbReference type="ChEBI" id="CHEBI:49883"/>
        <label>2</label>
    </ligand>
</feature>
<feature type="binding site" evidence="1">
    <location>
        <position position="109"/>
    </location>
    <ligand>
        <name>[4Fe-4S] cluster</name>
        <dbReference type="ChEBI" id="CHEBI:49883"/>
        <label>1</label>
    </ligand>
</feature>
<evidence type="ECO:0000255" key="1">
    <source>
        <dbReference type="HAMAP-Rule" id="MF_01351"/>
    </source>
</evidence>
<evidence type="ECO:0000256" key="2">
    <source>
        <dbReference type="SAM" id="MobiDB-lite"/>
    </source>
</evidence>
<proteinExistence type="inferred from homology"/>
<protein>
    <recommendedName>
        <fullName evidence="1">NADH-quinone oxidoreductase subunit I</fullName>
        <ecNumber evidence="1">7.1.1.-</ecNumber>
    </recommendedName>
    <alternativeName>
        <fullName evidence="1">NADH dehydrogenase I subunit I</fullName>
    </alternativeName>
    <alternativeName>
        <fullName evidence="1">NDH-1 subunit I</fullName>
    </alternativeName>
</protein>
<accession>C1AZF5</accession>